<protein>
    <recommendedName>
        <fullName evidence="7">Photosynthetic NDH subunit of lumenal location 4, chloroplastic</fullName>
    </recommendedName>
    <alternativeName>
        <fullName>FK506-binding protein 16-2</fullName>
        <shortName>AtFKBP16-2</shortName>
    </alternativeName>
    <alternativeName>
        <fullName>Immunophilin FKBP16-2</fullName>
    </alternativeName>
    <alternativeName>
        <fullName>Peptidyl-prolyl cis-trans isomerase FKBP16-2</fullName>
        <shortName>PPIase FKBP16-2</shortName>
        <ecNumber>5.2.1.8</ecNumber>
    </alternativeName>
    <alternativeName>
        <fullName>Rotamase</fullName>
    </alternativeName>
</protein>
<organism>
    <name type="scientific">Arabidopsis thaliana</name>
    <name type="common">Mouse-ear cress</name>
    <dbReference type="NCBI Taxonomy" id="3702"/>
    <lineage>
        <taxon>Eukaryota</taxon>
        <taxon>Viridiplantae</taxon>
        <taxon>Streptophyta</taxon>
        <taxon>Embryophyta</taxon>
        <taxon>Tracheophyta</taxon>
        <taxon>Spermatophyta</taxon>
        <taxon>Magnoliopsida</taxon>
        <taxon>eudicotyledons</taxon>
        <taxon>Gunneridae</taxon>
        <taxon>Pentapetalae</taxon>
        <taxon>rosids</taxon>
        <taxon>malvids</taxon>
        <taxon>Brassicales</taxon>
        <taxon>Brassicaceae</taxon>
        <taxon>Camelineae</taxon>
        <taxon>Arabidopsis</taxon>
    </lineage>
</organism>
<proteinExistence type="evidence at protein level"/>
<evidence type="ECO:0000250" key="1"/>
<evidence type="ECO:0000255" key="2"/>
<evidence type="ECO:0000255" key="3">
    <source>
        <dbReference type="PROSITE-ProRule" id="PRU00277"/>
    </source>
</evidence>
<evidence type="ECO:0000269" key="4">
    <source>
    </source>
</evidence>
<evidence type="ECO:0000269" key="5">
    <source>
    </source>
</evidence>
<evidence type="ECO:0000269" key="6">
    <source>
    </source>
</evidence>
<evidence type="ECO:0000303" key="7">
    <source>
    </source>
</evidence>
<evidence type="ECO:0000305" key="8"/>
<evidence type="ECO:0000312" key="9">
    <source>
        <dbReference type="Araport" id="AT4G39710"/>
    </source>
</evidence>
<evidence type="ECO:0000312" key="10">
    <source>
        <dbReference type="EMBL" id="CAA18757.1"/>
    </source>
</evidence>
<keyword id="KW-0002">3D-structure</keyword>
<keyword id="KW-0025">Alternative splicing</keyword>
<keyword id="KW-0150">Chloroplast</keyword>
<keyword id="KW-1015">Disulfide bond</keyword>
<keyword id="KW-0413">Isomerase</keyword>
<keyword id="KW-0934">Plastid</keyword>
<keyword id="KW-1185">Reference proteome</keyword>
<keyword id="KW-0697">Rotamase</keyword>
<keyword id="KW-0793">Thylakoid</keyword>
<keyword id="KW-0809">Transit peptide</keyword>
<keyword id="KW-0813">Transport</keyword>
<accession>Q9SCY3</accession>
<accession>O65658</accession>
<accession>Q941D9</accession>
<name>PNSL4_ARATH</name>
<dbReference type="EC" id="5.2.1.8"/>
<dbReference type="EMBL" id="AJ242481">
    <property type="protein sequence ID" value="CAB64721.1"/>
    <property type="molecule type" value="mRNA"/>
</dbReference>
<dbReference type="EMBL" id="AL022605">
    <property type="protein sequence ID" value="CAA18757.1"/>
    <property type="status" value="ALT_SEQ"/>
    <property type="molecule type" value="Genomic_DNA"/>
</dbReference>
<dbReference type="EMBL" id="AL161595">
    <property type="protein sequence ID" value="CAB80634.1"/>
    <property type="status" value="ALT_SEQ"/>
    <property type="molecule type" value="Genomic_DNA"/>
</dbReference>
<dbReference type="EMBL" id="CP002687">
    <property type="protein sequence ID" value="AEE87107.1"/>
    <property type="molecule type" value="Genomic_DNA"/>
</dbReference>
<dbReference type="EMBL" id="CP002687">
    <property type="protein sequence ID" value="ANM67449.1"/>
    <property type="molecule type" value="Genomic_DNA"/>
</dbReference>
<dbReference type="EMBL" id="AY052226">
    <property type="protein sequence ID" value="AAK97696.1"/>
    <property type="status" value="ALT_SEQ"/>
    <property type="molecule type" value="mRNA"/>
</dbReference>
<dbReference type="PIR" id="T05008">
    <property type="entry name" value="T05008"/>
</dbReference>
<dbReference type="RefSeq" id="NP_001329278.1">
    <molecule id="Q9SCY3-1"/>
    <property type="nucleotide sequence ID" value="NM_001342549.1"/>
</dbReference>
<dbReference type="RefSeq" id="NP_568067.1">
    <molecule id="Q9SCY3-1"/>
    <property type="nucleotide sequence ID" value="NM_120132.4"/>
</dbReference>
<dbReference type="PDB" id="7WFF">
    <property type="method" value="EM"/>
    <property type="resolution" value="3.59 A"/>
    <property type="chains" value="i=1-217"/>
</dbReference>
<dbReference type="PDB" id="7WG5">
    <property type="method" value="EM"/>
    <property type="resolution" value="3.89 A"/>
    <property type="chains" value="i=1-217"/>
</dbReference>
<dbReference type="PDBsum" id="7WFF"/>
<dbReference type="PDBsum" id="7WG5"/>
<dbReference type="EMDB" id="EMD-32464"/>
<dbReference type="EMDB" id="EMD-32477"/>
<dbReference type="SMR" id="Q9SCY3"/>
<dbReference type="BioGRID" id="15406">
    <property type="interactions" value="3"/>
</dbReference>
<dbReference type="FunCoup" id="Q9SCY3">
    <property type="interactions" value="692"/>
</dbReference>
<dbReference type="IntAct" id="Q9SCY3">
    <property type="interactions" value="2"/>
</dbReference>
<dbReference type="STRING" id="3702.Q9SCY3"/>
<dbReference type="iPTMnet" id="Q9SCY3"/>
<dbReference type="PaxDb" id="3702-AT4G39710.1"/>
<dbReference type="ProteomicsDB" id="226158">
    <molecule id="Q9SCY3-1"/>
</dbReference>
<dbReference type="EnsemblPlants" id="AT4G39710.1">
    <molecule id="Q9SCY3-1"/>
    <property type="protein sequence ID" value="AT4G39710.1"/>
    <property type="gene ID" value="AT4G39710"/>
</dbReference>
<dbReference type="EnsemblPlants" id="AT4G39710.3">
    <molecule id="Q9SCY3-1"/>
    <property type="protein sequence ID" value="AT4G39710.3"/>
    <property type="gene ID" value="AT4G39710"/>
</dbReference>
<dbReference type="GeneID" id="830126"/>
<dbReference type="Gramene" id="AT4G39710.1">
    <molecule id="Q9SCY3-1"/>
    <property type="protein sequence ID" value="AT4G39710.1"/>
    <property type="gene ID" value="AT4G39710"/>
</dbReference>
<dbReference type="Gramene" id="AT4G39710.3">
    <molecule id="Q9SCY3-1"/>
    <property type="protein sequence ID" value="AT4G39710.3"/>
    <property type="gene ID" value="AT4G39710"/>
</dbReference>
<dbReference type="KEGG" id="ath:AT4G39710"/>
<dbReference type="Araport" id="AT4G39710"/>
<dbReference type="TAIR" id="AT4G39710">
    <property type="gene designation" value="PNSL4"/>
</dbReference>
<dbReference type="eggNOG" id="KOG0549">
    <property type="taxonomic scope" value="Eukaryota"/>
</dbReference>
<dbReference type="HOGENOM" id="CLU_013615_10_3_1"/>
<dbReference type="InParanoid" id="Q9SCY3"/>
<dbReference type="OMA" id="SCELNFA"/>
<dbReference type="OrthoDB" id="1902587at2759"/>
<dbReference type="PhylomeDB" id="Q9SCY3"/>
<dbReference type="PRO" id="PR:Q9SCY3"/>
<dbReference type="Proteomes" id="UP000006548">
    <property type="component" value="Chromosome 4"/>
</dbReference>
<dbReference type="ExpressionAtlas" id="Q9SCY3">
    <property type="expression patterns" value="baseline and differential"/>
</dbReference>
<dbReference type="GO" id="GO:0009507">
    <property type="term" value="C:chloroplast"/>
    <property type="evidence" value="ECO:0007005"/>
    <property type="project" value="TAIR"/>
</dbReference>
<dbReference type="GO" id="GO:0009543">
    <property type="term" value="C:chloroplast thylakoid lumen"/>
    <property type="evidence" value="ECO:0007669"/>
    <property type="project" value="UniProtKB-SubCell"/>
</dbReference>
<dbReference type="GO" id="GO:0009535">
    <property type="term" value="C:chloroplast thylakoid membrane"/>
    <property type="evidence" value="ECO:0007005"/>
    <property type="project" value="TAIR"/>
</dbReference>
<dbReference type="GO" id="GO:0005886">
    <property type="term" value="C:plasma membrane"/>
    <property type="evidence" value="ECO:0007005"/>
    <property type="project" value="TAIR"/>
</dbReference>
<dbReference type="GO" id="GO:0009579">
    <property type="term" value="C:thylakoid"/>
    <property type="evidence" value="ECO:0007005"/>
    <property type="project" value="TAIR"/>
</dbReference>
<dbReference type="GO" id="GO:0003755">
    <property type="term" value="F:peptidyl-prolyl cis-trans isomerase activity"/>
    <property type="evidence" value="ECO:0007669"/>
    <property type="project" value="UniProtKB-KW"/>
</dbReference>
<dbReference type="FunFam" id="3.10.50.40:FF:000032">
    <property type="entry name" value="Peptidylprolyl isomerase"/>
    <property type="match status" value="1"/>
</dbReference>
<dbReference type="Gene3D" id="3.10.50.40">
    <property type="match status" value="1"/>
</dbReference>
<dbReference type="InterPro" id="IPR044183">
    <property type="entry name" value="PNSL4/FKBP13-like"/>
</dbReference>
<dbReference type="InterPro" id="IPR046357">
    <property type="entry name" value="PPIase_dom_sf"/>
</dbReference>
<dbReference type="InterPro" id="IPR001179">
    <property type="entry name" value="PPIase_FKBP_dom"/>
</dbReference>
<dbReference type="PANTHER" id="PTHR47833">
    <property type="entry name" value="PHOTOSYNTHETIC NDH SUBUNIT OF LUMENAL LOCATION 4, CHLOROPLASTIC"/>
    <property type="match status" value="1"/>
</dbReference>
<dbReference type="PANTHER" id="PTHR47833:SF1">
    <property type="entry name" value="PHOTOSYNTHETIC NDH SUBUNIT OF LUMENAL LOCATION 4, CHLOROPLASTIC"/>
    <property type="match status" value="1"/>
</dbReference>
<dbReference type="Pfam" id="PF00254">
    <property type="entry name" value="FKBP_C"/>
    <property type="match status" value="1"/>
</dbReference>
<dbReference type="SUPFAM" id="SSF54534">
    <property type="entry name" value="FKBP-like"/>
    <property type="match status" value="1"/>
</dbReference>
<dbReference type="PROSITE" id="PS50059">
    <property type="entry name" value="FKBP_PPIASE"/>
    <property type="match status" value="1"/>
</dbReference>
<comment type="function">
    <text evidence="1 5 8">NDH shuttles electrons from NAD(P)H:plastoquinone, via FMN and iron-sulfur (Fe-S) centers, to quinones in the photosynthetic chain and possibly in a chloroplast respiratory chain. The immediate electron acceptor for the enzyme in this species is believed to be plastoquinone. Couples the redox reaction to proton translocation, and thus conserves the redox energy in a proton gradient (Probable). PPIases accelerate the folding of proteins. It catalyzes the cis-trans isomerization of proline imidic peptide bonds in oligopeptides (By similarity). Seems to be essential for stabilizing the NDH subcomplex A (PubMed:19903870).</text>
</comment>
<comment type="catalytic activity">
    <reaction>
        <text>[protein]-peptidylproline (omega=180) = [protein]-peptidylproline (omega=0)</text>
        <dbReference type="Rhea" id="RHEA:16237"/>
        <dbReference type="Rhea" id="RHEA-COMP:10747"/>
        <dbReference type="Rhea" id="RHEA-COMP:10748"/>
        <dbReference type="ChEBI" id="CHEBI:83833"/>
        <dbReference type="ChEBI" id="CHEBI:83834"/>
        <dbReference type="EC" id="5.2.1.8"/>
    </reaction>
</comment>
<comment type="subunit">
    <text evidence="6">Part of the chloroplast NDH complex, composed of a mixture of chloroplast and nucleus encoded subunits. Component of the NDH lumenal subcomplex, at least composed of PnsL1, PnsL2, PnsL3, PnsL4 and PnsL5.</text>
</comment>
<comment type="interaction">
    <interactant intactId="EBI-2436954">
        <id>Q9SCY3</id>
    </interactant>
    <interactant intactId="EBI-2436968">
        <id>Q9ZR03</id>
        <label>petC</label>
    </interactant>
    <organismsDiffer>false</organismsDiffer>
    <experiments>3</experiments>
</comment>
<comment type="subcellular location">
    <subcellularLocation>
        <location evidence="4">Plastid</location>
        <location evidence="4">Chloroplast thylakoid lumen</location>
    </subcellularLocation>
</comment>
<comment type="alternative products">
    <event type="alternative splicing"/>
    <isoform>
        <id>Q9SCY3-1</id>
        <name>1</name>
        <sequence type="displayed"/>
    </isoform>
    <text>A number of isoforms are produced. According to EST sequences.</text>
</comment>
<comment type="disruption phenotype">
    <text evidence="5">RNAi mutant displays impaired NDH activity.</text>
</comment>
<comment type="similarity">
    <text evidence="8">Belongs to the FKBP-type PPIase family.</text>
</comment>
<comment type="sequence caution" evidence="8">
    <conflict type="erroneous termination">
        <sequence resource="EMBL-CDS" id="AAK97696"/>
    </conflict>
    <text>Truncated C-terminus.</text>
</comment>
<comment type="sequence caution" evidence="8">
    <conflict type="erroneous gene model prediction">
        <sequence resource="EMBL-CDS" id="CAA18757"/>
    </conflict>
</comment>
<comment type="sequence caution" evidence="8">
    <conflict type="erroneous gene model prediction">
        <sequence resource="EMBL-CDS" id="CAB80634"/>
    </conflict>
</comment>
<feature type="transit peptide" description="Chloroplast" evidence="2">
    <location>
        <begin position="1"/>
        <end position="34"/>
    </location>
</feature>
<feature type="transit peptide" description="Thylakoid" evidence="2">
    <location>
        <begin position="35"/>
        <end status="unknown"/>
    </location>
</feature>
<feature type="chain" id="PRO_0000045903" description="Photosynthetic NDH subunit of lumenal location 4, chloroplastic">
    <location>
        <begin status="unknown"/>
        <end position="217"/>
    </location>
</feature>
<feature type="domain" description="PPIase FKBP-type" evidence="3">
    <location>
        <begin position="112"/>
        <end position="211"/>
    </location>
</feature>
<feature type="disulfide bond" evidence="1">
    <location>
        <begin position="87"/>
        <end position="99"/>
    </location>
</feature>
<feature type="disulfide bond" evidence="1">
    <location>
        <begin position="188"/>
        <end position="193"/>
    </location>
</feature>
<reference key="1">
    <citation type="submission" date="1999-05" db="EMBL/GenBank/DDBJ databases">
        <title>Structure and evolution of FKBP-like genes in Arabidopsis.</title>
        <authorList>
            <person name="Kolukisaoglu U."/>
            <person name="Billion K."/>
            <person name="Eckhoff A."/>
            <person name="Moeller A."/>
            <person name="Saal B."/>
            <person name="Wanke D."/>
            <person name="Schulz B."/>
        </authorList>
    </citation>
    <scope>NUCLEOTIDE SEQUENCE [MRNA]</scope>
    <source>
        <strain>cv. Columbia</strain>
    </source>
</reference>
<reference key="2">
    <citation type="journal article" date="1999" name="Nature">
        <title>Sequence and analysis of chromosome 4 of the plant Arabidopsis thaliana.</title>
        <authorList>
            <person name="Mayer K.F.X."/>
            <person name="Schueller C."/>
            <person name="Wambutt R."/>
            <person name="Murphy G."/>
            <person name="Volckaert G."/>
            <person name="Pohl T."/>
            <person name="Duesterhoeft A."/>
            <person name="Stiekema W."/>
            <person name="Entian K.-D."/>
            <person name="Terryn N."/>
            <person name="Harris B."/>
            <person name="Ansorge W."/>
            <person name="Brandt P."/>
            <person name="Grivell L.A."/>
            <person name="Rieger M."/>
            <person name="Weichselgartner M."/>
            <person name="de Simone V."/>
            <person name="Obermaier B."/>
            <person name="Mache R."/>
            <person name="Mueller M."/>
            <person name="Kreis M."/>
            <person name="Delseny M."/>
            <person name="Puigdomenech P."/>
            <person name="Watson M."/>
            <person name="Schmidtheini T."/>
            <person name="Reichert B."/>
            <person name="Portetelle D."/>
            <person name="Perez-Alonso M."/>
            <person name="Boutry M."/>
            <person name="Bancroft I."/>
            <person name="Vos P."/>
            <person name="Hoheisel J."/>
            <person name="Zimmermann W."/>
            <person name="Wedler H."/>
            <person name="Ridley P."/>
            <person name="Langham S.-A."/>
            <person name="McCullagh B."/>
            <person name="Bilham L."/>
            <person name="Robben J."/>
            <person name="van der Schueren J."/>
            <person name="Grymonprez B."/>
            <person name="Chuang Y.-J."/>
            <person name="Vandenbussche F."/>
            <person name="Braeken M."/>
            <person name="Weltjens I."/>
            <person name="Voet M."/>
            <person name="Bastiaens I."/>
            <person name="Aert R."/>
            <person name="Defoor E."/>
            <person name="Weitzenegger T."/>
            <person name="Bothe G."/>
            <person name="Ramsperger U."/>
            <person name="Hilbert H."/>
            <person name="Braun M."/>
            <person name="Holzer E."/>
            <person name="Brandt A."/>
            <person name="Peters S."/>
            <person name="van Staveren M."/>
            <person name="Dirkse W."/>
            <person name="Mooijman P."/>
            <person name="Klein Lankhorst R."/>
            <person name="Rose M."/>
            <person name="Hauf J."/>
            <person name="Koetter P."/>
            <person name="Berneiser S."/>
            <person name="Hempel S."/>
            <person name="Feldpausch M."/>
            <person name="Lamberth S."/>
            <person name="Van den Daele H."/>
            <person name="De Keyser A."/>
            <person name="Buysshaert C."/>
            <person name="Gielen J."/>
            <person name="Villarroel R."/>
            <person name="De Clercq R."/>
            <person name="van Montagu M."/>
            <person name="Rogers J."/>
            <person name="Cronin A."/>
            <person name="Quail M.A."/>
            <person name="Bray-Allen S."/>
            <person name="Clark L."/>
            <person name="Doggett J."/>
            <person name="Hall S."/>
            <person name="Kay M."/>
            <person name="Lennard N."/>
            <person name="McLay K."/>
            <person name="Mayes R."/>
            <person name="Pettett A."/>
            <person name="Rajandream M.A."/>
            <person name="Lyne M."/>
            <person name="Benes V."/>
            <person name="Rechmann S."/>
            <person name="Borkova D."/>
            <person name="Bloecker H."/>
            <person name="Scharfe M."/>
            <person name="Grimm M."/>
            <person name="Loehnert T.-H."/>
            <person name="Dose S."/>
            <person name="de Haan M."/>
            <person name="Maarse A.C."/>
            <person name="Schaefer M."/>
            <person name="Mueller-Auer S."/>
            <person name="Gabel C."/>
            <person name="Fuchs M."/>
            <person name="Fartmann B."/>
            <person name="Granderath K."/>
            <person name="Dauner D."/>
            <person name="Herzl A."/>
            <person name="Neumann S."/>
            <person name="Argiriou A."/>
            <person name="Vitale D."/>
            <person name="Liguori R."/>
            <person name="Piravandi E."/>
            <person name="Massenet O."/>
            <person name="Quigley F."/>
            <person name="Clabauld G."/>
            <person name="Muendlein A."/>
            <person name="Felber R."/>
            <person name="Schnabl S."/>
            <person name="Hiller R."/>
            <person name="Schmidt W."/>
            <person name="Lecharny A."/>
            <person name="Aubourg S."/>
            <person name="Chefdor F."/>
            <person name="Cooke R."/>
            <person name="Berger C."/>
            <person name="Monfort A."/>
            <person name="Casacuberta E."/>
            <person name="Gibbons T."/>
            <person name="Weber N."/>
            <person name="Vandenbol M."/>
            <person name="Bargues M."/>
            <person name="Terol J."/>
            <person name="Torres A."/>
            <person name="Perez-Perez A."/>
            <person name="Purnelle B."/>
            <person name="Bent E."/>
            <person name="Johnson S."/>
            <person name="Tacon D."/>
            <person name="Jesse T."/>
            <person name="Heijnen L."/>
            <person name="Schwarz S."/>
            <person name="Scholler P."/>
            <person name="Heber S."/>
            <person name="Francs P."/>
            <person name="Bielke C."/>
            <person name="Frishman D."/>
            <person name="Haase D."/>
            <person name="Lemcke K."/>
            <person name="Mewes H.-W."/>
            <person name="Stocker S."/>
            <person name="Zaccaria P."/>
            <person name="Bevan M."/>
            <person name="Wilson R.K."/>
            <person name="de la Bastide M."/>
            <person name="Habermann K."/>
            <person name="Parnell L."/>
            <person name="Dedhia N."/>
            <person name="Gnoj L."/>
            <person name="Schutz K."/>
            <person name="Huang E."/>
            <person name="Spiegel L."/>
            <person name="Sekhon M."/>
            <person name="Murray J."/>
            <person name="Sheet P."/>
            <person name="Cordes M."/>
            <person name="Abu-Threideh J."/>
            <person name="Stoneking T."/>
            <person name="Kalicki J."/>
            <person name="Graves T."/>
            <person name="Harmon G."/>
            <person name="Edwards J."/>
            <person name="Latreille P."/>
            <person name="Courtney L."/>
            <person name="Cloud J."/>
            <person name="Abbott A."/>
            <person name="Scott K."/>
            <person name="Johnson D."/>
            <person name="Minx P."/>
            <person name="Bentley D."/>
            <person name="Fulton B."/>
            <person name="Miller N."/>
            <person name="Greco T."/>
            <person name="Kemp K."/>
            <person name="Kramer J."/>
            <person name="Fulton L."/>
            <person name="Mardis E."/>
            <person name="Dante M."/>
            <person name="Pepin K."/>
            <person name="Hillier L.W."/>
            <person name="Nelson J."/>
            <person name="Spieth J."/>
            <person name="Ryan E."/>
            <person name="Andrews S."/>
            <person name="Geisel C."/>
            <person name="Layman D."/>
            <person name="Du H."/>
            <person name="Ali J."/>
            <person name="Berghoff A."/>
            <person name="Jones K."/>
            <person name="Drone K."/>
            <person name="Cotton M."/>
            <person name="Joshu C."/>
            <person name="Antonoiu B."/>
            <person name="Zidanic M."/>
            <person name="Strong C."/>
            <person name="Sun H."/>
            <person name="Lamar B."/>
            <person name="Yordan C."/>
            <person name="Ma P."/>
            <person name="Zhong J."/>
            <person name="Preston R."/>
            <person name="Vil D."/>
            <person name="Shekher M."/>
            <person name="Matero A."/>
            <person name="Shah R."/>
            <person name="Swaby I.K."/>
            <person name="O'Shaughnessy A."/>
            <person name="Rodriguez M."/>
            <person name="Hoffman J."/>
            <person name="Till S."/>
            <person name="Granat S."/>
            <person name="Shohdy N."/>
            <person name="Hasegawa A."/>
            <person name="Hameed A."/>
            <person name="Lodhi M."/>
            <person name="Johnson A."/>
            <person name="Chen E."/>
            <person name="Marra M.A."/>
            <person name="Martienssen R."/>
            <person name="McCombie W.R."/>
        </authorList>
    </citation>
    <scope>NUCLEOTIDE SEQUENCE [LARGE SCALE GENOMIC DNA]</scope>
    <source>
        <strain>cv. Columbia</strain>
    </source>
</reference>
<reference key="3">
    <citation type="journal article" date="2017" name="Plant J.">
        <title>Araport11: a complete reannotation of the Arabidopsis thaliana reference genome.</title>
        <authorList>
            <person name="Cheng C.Y."/>
            <person name="Krishnakumar V."/>
            <person name="Chan A.P."/>
            <person name="Thibaud-Nissen F."/>
            <person name="Schobel S."/>
            <person name="Town C.D."/>
        </authorList>
    </citation>
    <scope>GENOME REANNOTATION</scope>
    <source>
        <strain>cv. Columbia</strain>
    </source>
</reference>
<reference key="4">
    <citation type="journal article" date="2003" name="Science">
        <title>Empirical analysis of transcriptional activity in the Arabidopsis genome.</title>
        <authorList>
            <person name="Yamada K."/>
            <person name="Lim J."/>
            <person name="Dale J.M."/>
            <person name="Chen H."/>
            <person name="Shinn P."/>
            <person name="Palm C.J."/>
            <person name="Southwick A.M."/>
            <person name="Wu H.C."/>
            <person name="Kim C.J."/>
            <person name="Nguyen M."/>
            <person name="Pham P.K."/>
            <person name="Cheuk R.F."/>
            <person name="Karlin-Newmann G."/>
            <person name="Liu S.X."/>
            <person name="Lam B."/>
            <person name="Sakano H."/>
            <person name="Wu T."/>
            <person name="Yu G."/>
            <person name="Miranda M."/>
            <person name="Quach H.L."/>
            <person name="Tripp M."/>
            <person name="Chang C.H."/>
            <person name="Lee J.M."/>
            <person name="Toriumi M.J."/>
            <person name="Chan M.M."/>
            <person name="Tang C.C."/>
            <person name="Onodera C.S."/>
            <person name="Deng J.M."/>
            <person name="Akiyama K."/>
            <person name="Ansari Y."/>
            <person name="Arakawa T."/>
            <person name="Banh J."/>
            <person name="Banno F."/>
            <person name="Bowser L."/>
            <person name="Brooks S.Y."/>
            <person name="Carninci P."/>
            <person name="Chao Q."/>
            <person name="Choy N."/>
            <person name="Enju A."/>
            <person name="Goldsmith A.D."/>
            <person name="Gurjal M."/>
            <person name="Hansen N.F."/>
            <person name="Hayashizaki Y."/>
            <person name="Johnson-Hopson C."/>
            <person name="Hsuan V.W."/>
            <person name="Iida K."/>
            <person name="Karnes M."/>
            <person name="Khan S."/>
            <person name="Koesema E."/>
            <person name="Ishida J."/>
            <person name="Jiang P.X."/>
            <person name="Jones T."/>
            <person name="Kawai J."/>
            <person name="Kamiya A."/>
            <person name="Meyers C."/>
            <person name="Nakajima M."/>
            <person name="Narusaka M."/>
            <person name="Seki M."/>
            <person name="Sakurai T."/>
            <person name="Satou M."/>
            <person name="Tamse R."/>
            <person name="Vaysberg M."/>
            <person name="Wallender E.K."/>
            <person name="Wong C."/>
            <person name="Yamamura Y."/>
            <person name="Yuan S."/>
            <person name="Shinozaki K."/>
            <person name="Davis R.W."/>
            <person name="Theologis A."/>
            <person name="Ecker J.R."/>
        </authorList>
    </citation>
    <scope>NUCLEOTIDE SEQUENCE [LARGE SCALE MRNA]</scope>
    <source>
        <strain>cv. Columbia</strain>
    </source>
</reference>
<reference key="5">
    <citation type="journal article" date="2002" name="Plant Cell">
        <title>Central functions of the lumenal and peripheral thylakoid proteome of Arabidopsis determined by experimentation and genome-wide prediction.</title>
        <authorList>
            <person name="Peltier J.-B."/>
            <person name="Emanuelsson O."/>
            <person name="Kalume D.E."/>
            <person name="Ytterberg J."/>
            <person name="Friso G."/>
            <person name="Rudella A."/>
            <person name="Liberles D.A."/>
            <person name="Soederberg L."/>
            <person name="Roepstorff P."/>
            <person name="von Heijne G."/>
            <person name="van Wijk K.J."/>
        </authorList>
    </citation>
    <scope>SUBCELLULAR LOCATION</scope>
    <scope>IDENTIFICATION BY MASS SPECTROMETRY</scope>
</reference>
<reference key="6">
    <citation type="journal article" date="2004" name="Plant Physiol.">
        <title>Immunophilins and parvulins. Superfamily of peptidyl prolyl isomerases in Arabidopsis.</title>
        <authorList>
            <person name="He Z."/>
            <person name="Li L."/>
            <person name="Luan S."/>
        </authorList>
    </citation>
    <scope>GENE FAMILY</scope>
    <scope>NOMENCLATURE</scope>
</reference>
<reference key="7">
    <citation type="journal article" date="2009" name="Mol. Plant">
        <title>Towards characterization of the chloroplast NAD(P)H dehydrogenase complex.</title>
        <authorList>
            <person name="Suorsa M."/>
            <person name="Sirpioe S."/>
            <person name="Aro E.M."/>
        </authorList>
    </citation>
    <scope>REVIEW</scope>
</reference>
<reference key="8">
    <citation type="journal article" date="2009" name="Plant Cell">
        <title>Efficient operation of NAD(P)H dehydrogenase requires supercomplex formation with photosystem I via minor LHCI in Arabidopsis.</title>
        <authorList>
            <person name="Peng L."/>
            <person name="Fukao Y."/>
            <person name="Fujiwara M."/>
            <person name="Takami T."/>
            <person name="Shikanai T."/>
        </authorList>
    </citation>
    <scope>FUNCTION</scope>
    <scope>IDENTIFICATION BY MASS SPECTROMETRY</scope>
    <scope>DISRUPTION PHENOTYPE</scope>
    <scope>COMPONENT OF THE CHLOROPLAST NDH SUBCOMPLEX L</scope>
</reference>
<reference key="9">
    <citation type="journal article" date="2011" name="Biochim. Biophys. Acta">
        <title>Structure and biogenesis of the chloroplast NAD(P)H dehydrogenase complex.</title>
        <authorList>
            <person name="Peng L."/>
            <person name="Yamamoto H."/>
            <person name="Shikanai T."/>
        </authorList>
    </citation>
    <scope>REVIEW</scope>
</reference>
<reference key="10">
    <citation type="journal article" date="2011" name="Plant Cell Physiol.">
        <title>Structure of the chloroplast NADH dehydrogenase-like complex: nomenclature for nuclear-encoded subunits.</title>
        <authorList>
            <person name="Ifuku K."/>
            <person name="Endo T."/>
            <person name="Shikanai T."/>
            <person name="Aro E.M."/>
        </authorList>
    </citation>
    <scope>NOMENCLATURE</scope>
    <scope>COMPONENT OF THE NDH COMPLEX</scope>
</reference>
<sequence>MAISTLTLTQSLYTRSFRPTIFFSSSSSSSFSCLCSSSSDCEPKLSVKKRVFGVGLGFLASSILSLTPLDADATRIDYYATVGDPLCEYSYAKSGLGFCDLDVGFGDEAPRGVLVNIHYTARFADGTLFDSSYKRARPLTMRIGVGKVIRGLDQGILGGEGVPPMRVGGKRKLQIPPKLAYGPEPAGCFSGDCNIPGNATLLYDINFVEIYPGSNTR</sequence>
<gene>
    <name evidence="7" type="primary">PNSL4</name>
    <name type="synonym">FKBP16-2</name>
    <name type="synonym">FKBP22-2</name>
    <name type="synonym">FKBP23I</name>
    <name evidence="9" type="ordered locus">At4g39710</name>
    <name evidence="10" type="ORF">T19P19.100</name>
</gene>